<proteinExistence type="inferred from homology"/>
<dbReference type="EMBL" id="CP000720">
    <property type="protein sequence ID" value="ABS48541.1"/>
    <property type="molecule type" value="Genomic_DNA"/>
</dbReference>
<dbReference type="RefSeq" id="WP_002212324.1">
    <property type="nucleotide sequence ID" value="NC_009708.1"/>
</dbReference>
<dbReference type="SMR" id="A7FNP0"/>
<dbReference type="GeneID" id="97454225"/>
<dbReference type="KEGG" id="ypi:YpsIP31758_3920"/>
<dbReference type="HOGENOM" id="CLU_072226_1_1_6"/>
<dbReference type="Proteomes" id="UP000002412">
    <property type="component" value="Chromosome"/>
</dbReference>
<dbReference type="GO" id="GO:0015935">
    <property type="term" value="C:small ribosomal subunit"/>
    <property type="evidence" value="ECO:0007669"/>
    <property type="project" value="InterPro"/>
</dbReference>
<dbReference type="GO" id="GO:0019843">
    <property type="term" value="F:rRNA binding"/>
    <property type="evidence" value="ECO:0007669"/>
    <property type="project" value="UniProtKB-UniRule"/>
</dbReference>
<dbReference type="GO" id="GO:0003735">
    <property type="term" value="F:structural constituent of ribosome"/>
    <property type="evidence" value="ECO:0007669"/>
    <property type="project" value="InterPro"/>
</dbReference>
<dbReference type="GO" id="GO:0000049">
    <property type="term" value="F:tRNA binding"/>
    <property type="evidence" value="ECO:0007669"/>
    <property type="project" value="UniProtKB-UniRule"/>
</dbReference>
<dbReference type="GO" id="GO:0006412">
    <property type="term" value="P:translation"/>
    <property type="evidence" value="ECO:0007669"/>
    <property type="project" value="UniProtKB-UniRule"/>
</dbReference>
<dbReference type="CDD" id="cd14869">
    <property type="entry name" value="uS7_Bacteria"/>
    <property type="match status" value="1"/>
</dbReference>
<dbReference type="FunFam" id="1.10.455.10:FF:000001">
    <property type="entry name" value="30S ribosomal protein S7"/>
    <property type="match status" value="1"/>
</dbReference>
<dbReference type="Gene3D" id="1.10.455.10">
    <property type="entry name" value="Ribosomal protein S7 domain"/>
    <property type="match status" value="1"/>
</dbReference>
<dbReference type="HAMAP" id="MF_00480_B">
    <property type="entry name" value="Ribosomal_uS7_B"/>
    <property type="match status" value="1"/>
</dbReference>
<dbReference type="InterPro" id="IPR000235">
    <property type="entry name" value="Ribosomal_uS7"/>
</dbReference>
<dbReference type="InterPro" id="IPR005717">
    <property type="entry name" value="Ribosomal_uS7_bac/org-type"/>
</dbReference>
<dbReference type="InterPro" id="IPR020606">
    <property type="entry name" value="Ribosomal_uS7_CS"/>
</dbReference>
<dbReference type="InterPro" id="IPR023798">
    <property type="entry name" value="Ribosomal_uS7_dom"/>
</dbReference>
<dbReference type="InterPro" id="IPR036823">
    <property type="entry name" value="Ribosomal_uS7_dom_sf"/>
</dbReference>
<dbReference type="NCBIfam" id="TIGR01029">
    <property type="entry name" value="rpsG_bact"/>
    <property type="match status" value="1"/>
</dbReference>
<dbReference type="PANTHER" id="PTHR11205">
    <property type="entry name" value="RIBOSOMAL PROTEIN S7"/>
    <property type="match status" value="1"/>
</dbReference>
<dbReference type="Pfam" id="PF00177">
    <property type="entry name" value="Ribosomal_S7"/>
    <property type="match status" value="1"/>
</dbReference>
<dbReference type="PIRSF" id="PIRSF002122">
    <property type="entry name" value="RPS7p_RPS7a_RPS5e_RPS7o"/>
    <property type="match status" value="1"/>
</dbReference>
<dbReference type="SUPFAM" id="SSF47973">
    <property type="entry name" value="Ribosomal protein S7"/>
    <property type="match status" value="1"/>
</dbReference>
<dbReference type="PROSITE" id="PS00052">
    <property type="entry name" value="RIBOSOMAL_S7"/>
    <property type="match status" value="1"/>
</dbReference>
<comment type="function">
    <text evidence="1">One of the primary rRNA binding proteins, it binds directly to 16S rRNA where it nucleates assembly of the head domain of the 30S subunit. Is located at the subunit interface close to the decoding center, probably blocks exit of the E-site tRNA.</text>
</comment>
<comment type="subunit">
    <text evidence="1">Part of the 30S ribosomal subunit. Contacts proteins S9 and S11.</text>
</comment>
<comment type="similarity">
    <text evidence="1">Belongs to the universal ribosomal protein uS7 family.</text>
</comment>
<keyword id="KW-0687">Ribonucleoprotein</keyword>
<keyword id="KW-0689">Ribosomal protein</keyword>
<keyword id="KW-0694">RNA-binding</keyword>
<keyword id="KW-0699">rRNA-binding</keyword>
<keyword id="KW-0820">tRNA-binding</keyword>
<sequence length="156" mass="17606">MPRRRVIGQRKILPDPKFGSELLAKFVNILMVDGKKSTAEAIVYTALETLAQRSGKDFLEAFEVALDNVRPTVEVKSRRVGGSTYQVPVEVRPVRRNALAMRWIVDAARKRGDKSMALRLANELSDAAENKGSAVKKREDVHRMAEANKAFAHYRW</sequence>
<name>RS7_YERP3</name>
<accession>A7FNP0</accession>
<feature type="chain" id="PRO_1000060424" description="Small ribosomal subunit protein uS7">
    <location>
        <begin position="1"/>
        <end position="156"/>
    </location>
</feature>
<reference key="1">
    <citation type="journal article" date="2007" name="PLoS Genet.">
        <title>The complete genome sequence of Yersinia pseudotuberculosis IP31758, the causative agent of Far East scarlet-like fever.</title>
        <authorList>
            <person name="Eppinger M."/>
            <person name="Rosovitz M.J."/>
            <person name="Fricke W.F."/>
            <person name="Rasko D.A."/>
            <person name="Kokorina G."/>
            <person name="Fayolle C."/>
            <person name="Lindler L.E."/>
            <person name="Carniel E."/>
            <person name="Ravel J."/>
        </authorList>
    </citation>
    <scope>NUCLEOTIDE SEQUENCE [LARGE SCALE GENOMIC DNA]</scope>
    <source>
        <strain>IP 31758</strain>
    </source>
</reference>
<protein>
    <recommendedName>
        <fullName evidence="1">Small ribosomal subunit protein uS7</fullName>
    </recommendedName>
    <alternativeName>
        <fullName evidence="2">30S ribosomal protein S7</fullName>
    </alternativeName>
</protein>
<evidence type="ECO:0000255" key="1">
    <source>
        <dbReference type="HAMAP-Rule" id="MF_00480"/>
    </source>
</evidence>
<evidence type="ECO:0000305" key="2"/>
<organism>
    <name type="scientific">Yersinia pseudotuberculosis serotype O:1b (strain IP 31758)</name>
    <dbReference type="NCBI Taxonomy" id="349747"/>
    <lineage>
        <taxon>Bacteria</taxon>
        <taxon>Pseudomonadati</taxon>
        <taxon>Pseudomonadota</taxon>
        <taxon>Gammaproteobacteria</taxon>
        <taxon>Enterobacterales</taxon>
        <taxon>Yersiniaceae</taxon>
        <taxon>Yersinia</taxon>
    </lineage>
</organism>
<gene>
    <name evidence="1" type="primary">rpsG</name>
    <name type="ordered locus">YpsIP31758_3920</name>
</gene>